<sequence length="616" mass="65548">MPKYRSATTTHGRNMAGARALWRATGMTDADFGKPIIAVVNSFTQFVPGHVHLRDLGKLVAEQIEAAGGVAKEFNTIAVDDGIAMGHGGMLYSLPSRELIADSVEYMVNAHCADAMVCISNCDKITPGMLMASLRLNIPVIFVSGGPMEAGKTKLSDQIIKLDLVDAMIQGADPKVSDSQSDQVERSACPTCGSCSGMFTANSMNCLTEALGLSQPGNGSLLATHADRKQLFLNAGKRIVELTKRYYEQNDESALPRNIASKAAFENAMTLDIAMGGSTNTVLHLLAAAQEAEIDFTMSDIDKLSRKVPQLCKVAPSTQKYHMEDVHRAGGVIGILGELDRAGLLNRDVKNVLGLTLPQTLEQYDVMLTQDDSVKNMFRAGPAGIRTTQAFSQDCRWDSLDDDRANGCIRSLEHAYSKDGGLAVLYGNFAENGCIVKTAGVDDSILKFTGPAKVYESQDDAVDAILGGKVVAGDVVIIRYEGPKGGPGMQEMLYPTSFLKSMGLGKACALITDGRFSGGTSGLSIGHVSPEAASGGSIGLIEDGDLIAIDIPNRGIQLQVSDAELAARREAQEARGDKAWTPKNRERQVSFALRAYASLATSADKGAVRDKSKLGG</sequence>
<organism>
    <name type="scientific">Escherichia coli O7:K1 (strain IAI39 / ExPEC)</name>
    <dbReference type="NCBI Taxonomy" id="585057"/>
    <lineage>
        <taxon>Bacteria</taxon>
        <taxon>Pseudomonadati</taxon>
        <taxon>Pseudomonadota</taxon>
        <taxon>Gammaproteobacteria</taxon>
        <taxon>Enterobacterales</taxon>
        <taxon>Enterobacteriaceae</taxon>
        <taxon>Escherichia</taxon>
    </lineage>
</organism>
<gene>
    <name evidence="1" type="primary">ilvD</name>
    <name type="ordered locus">ECIAI39_3015</name>
</gene>
<name>ILVD_ECO7I</name>
<proteinExistence type="inferred from homology"/>
<feature type="chain" id="PRO_1000116270" description="Dihydroxy-acid dehydratase">
    <location>
        <begin position="1"/>
        <end position="616"/>
    </location>
</feature>
<feature type="active site" description="Proton acceptor" evidence="1">
    <location>
        <position position="517"/>
    </location>
</feature>
<feature type="binding site" evidence="1">
    <location>
        <position position="81"/>
    </location>
    <ligand>
        <name>Mg(2+)</name>
        <dbReference type="ChEBI" id="CHEBI:18420"/>
    </ligand>
</feature>
<feature type="binding site" evidence="1">
    <location>
        <position position="122"/>
    </location>
    <ligand>
        <name>[2Fe-2S] cluster</name>
        <dbReference type="ChEBI" id="CHEBI:190135"/>
    </ligand>
</feature>
<feature type="binding site" evidence="1">
    <location>
        <position position="123"/>
    </location>
    <ligand>
        <name>Mg(2+)</name>
        <dbReference type="ChEBI" id="CHEBI:18420"/>
    </ligand>
</feature>
<feature type="binding site" description="via carbamate group" evidence="1">
    <location>
        <position position="124"/>
    </location>
    <ligand>
        <name>Mg(2+)</name>
        <dbReference type="ChEBI" id="CHEBI:18420"/>
    </ligand>
</feature>
<feature type="binding site" evidence="1">
    <location>
        <position position="195"/>
    </location>
    <ligand>
        <name>[2Fe-2S] cluster</name>
        <dbReference type="ChEBI" id="CHEBI:190135"/>
    </ligand>
</feature>
<feature type="binding site" evidence="1">
    <location>
        <position position="491"/>
    </location>
    <ligand>
        <name>Mg(2+)</name>
        <dbReference type="ChEBI" id="CHEBI:18420"/>
    </ligand>
</feature>
<feature type="modified residue" description="N6-carboxylysine" evidence="1">
    <location>
        <position position="124"/>
    </location>
</feature>
<keyword id="KW-0001">2Fe-2S</keyword>
<keyword id="KW-0028">Amino-acid biosynthesis</keyword>
<keyword id="KW-0100">Branched-chain amino acid biosynthesis</keyword>
<keyword id="KW-0408">Iron</keyword>
<keyword id="KW-0411">Iron-sulfur</keyword>
<keyword id="KW-0456">Lyase</keyword>
<keyword id="KW-0460">Magnesium</keyword>
<keyword id="KW-0479">Metal-binding</keyword>
<dbReference type="EC" id="4.2.1.9" evidence="1"/>
<dbReference type="EMBL" id="CU928164">
    <property type="protein sequence ID" value="CAR19134.1"/>
    <property type="molecule type" value="Genomic_DNA"/>
</dbReference>
<dbReference type="RefSeq" id="WP_001127404.1">
    <property type="nucleotide sequence ID" value="NC_011750.1"/>
</dbReference>
<dbReference type="RefSeq" id="YP_002408944.1">
    <property type="nucleotide sequence ID" value="NC_011750.1"/>
</dbReference>
<dbReference type="SMR" id="B7NU26"/>
<dbReference type="STRING" id="585057.ECIAI39_3015"/>
<dbReference type="KEGG" id="ect:ECIAI39_3015"/>
<dbReference type="PATRIC" id="fig|585057.6.peg.3127"/>
<dbReference type="HOGENOM" id="CLU_014271_4_2_6"/>
<dbReference type="UniPathway" id="UPA00047">
    <property type="reaction ID" value="UER00057"/>
</dbReference>
<dbReference type="UniPathway" id="UPA00049">
    <property type="reaction ID" value="UER00061"/>
</dbReference>
<dbReference type="Proteomes" id="UP000000749">
    <property type="component" value="Chromosome"/>
</dbReference>
<dbReference type="GO" id="GO:0005829">
    <property type="term" value="C:cytosol"/>
    <property type="evidence" value="ECO:0007669"/>
    <property type="project" value="TreeGrafter"/>
</dbReference>
<dbReference type="GO" id="GO:0051537">
    <property type="term" value="F:2 iron, 2 sulfur cluster binding"/>
    <property type="evidence" value="ECO:0007669"/>
    <property type="project" value="UniProtKB-UniRule"/>
</dbReference>
<dbReference type="GO" id="GO:0004160">
    <property type="term" value="F:dihydroxy-acid dehydratase activity"/>
    <property type="evidence" value="ECO:0007669"/>
    <property type="project" value="UniProtKB-UniRule"/>
</dbReference>
<dbReference type="GO" id="GO:0000287">
    <property type="term" value="F:magnesium ion binding"/>
    <property type="evidence" value="ECO:0007669"/>
    <property type="project" value="UniProtKB-UniRule"/>
</dbReference>
<dbReference type="GO" id="GO:0009097">
    <property type="term" value="P:isoleucine biosynthetic process"/>
    <property type="evidence" value="ECO:0007669"/>
    <property type="project" value="UniProtKB-UniRule"/>
</dbReference>
<dbReference type="GO" id="GO:0009099">
    <property type="term" value="P:L-valine biosynthetic process"/>
    <property type="evidence" value="ECO:0007669"/>
    <property type="project" value="UniProtKB-UniRule"/>
</dbReference>
<dbReference type="FunFam" id="3.50.30.80:FF:000001">
    <property type="entry name" value="Dihydroxy-acid dehydratase"/>
    <property type="match status" value="1"/>
</dbReference>
<dbReference type="Gene3D" id="3.50.30.80">
    <property type="entry name" value="IlvD/EDD C-terminal domain-like"/>
    <property type="match status" value="1"/>
</dbReference>
<dbReference type="HAMAP" id="MF_00012">
    <property type="entry name" value="IlvD"/>
    <property type="match status" value="1"/>
</dbReference>
<dbReference type="InterPro" id="IPR042096">
    <property type="entry name" value="Dihydro-acid_dehy_C"/>
</dbReference>
<dbReference type="InterPro" id="IPR004404">
    <property type="entry name" value="DihydroxyA_deHydtase"/>
</dbReference>
<dbReference type="InterPro" id="IPR020558">
    <property type="entry name" value="DiOHA_6PGluconate_deHydtase_CS"/>
</dbReference>
<dbReference type="InterPro" id="IPR056740">
    <property type="entry name" value="ILV_EDD_C"/>
</dbReference>
<dbReference type="InterPro" id="IPR000581">
    <property type="entry name" value="ILV_EDD_N"/>
</dbReference>
<dbReference type="InterPro" id="IPR037237">
    <property type="entry name" value="IlvD/EDD_N"/>
</dbReference>
<dbReference type="NCBIfam" id="TIGR00110">
    <property type="entry name" value="ilvD"/>
    <property type="match status" value="1"/>
</dbReference>
<dbReference type="NCBIfam" id="NF009103">
    <property type="entry name" value="PRK12448.1"/>
    <property type="match status" value="1"/>
</dbReference>
<dbReference type="PANTHER" id="PTHR43661">
    <property type="entry name" value="D-XYLONATE DEHYDRATASE"/>
    <property type="match status" value="1"/>
</dbReference>
<dbReference type="PANTHER" id="PTHR43661:SF3">
    <property type="entry name" value="D-XYLONATE DEHYDRATASE YAGF-RELATED"/>
    <property type="match status" value="1"/>
</dbReference>
<dbReference type="Pfam" id="PF24877">
    <property type="entry name" value="ILV_EDD_C"/>
    <property type="match status" value="1"/>
</dbReference>
<dbReference type="Pfam" id="PF00920">
    <property type="entry name" value="ILVD_EDD_N"/>
    <property type="match status" value="1"/>
</dbReference>
<dbReference type="SUPFAM" id="SSF143975">
    <property type="entry name" value="IlvD/EDD N-terminal domain-like"/>
    <property type="match status" value="1"/>
</dbReference>
<dbReference type="SUPFAM" id="SSF52016">
    <property type="entry name" value="LeuD/IlvD-like"/>
    <property type="match status" value="1"/>
</dbReference>
<dbReference type="PROSITE" id="PS00886">
    <property type="entry name" value="ILVD_EDD_1"/>
    <property type="match status" value="1"/>
</dbReference>
<dbReference type="PROSITE" id="PS00887">
    <property type="entry name" value="ILVD_EDD_2"/>
    <property type="match status" value="1"/>
</dbReference>
<comment type="function">
    <text evidence="1">Functions in the biosynthesis of branched-chain amino acids. Catalyzes the dehydration of (2R,3R)-2,3-dihydroxy-3-methylpentanoate (2,3-dihydroxy-3-methylvalerate) into 2-oxo-3-methylpentanoate (2-oxo-3-methylvalerate) and of (2R)-2,3-dihydroxy-3-methylbutanoate (2,3-dihydroxyisovalerate) into 2-oxo-3-methylbutanoate (2-oxoisovalerate), the penultimate precursor to L-isoleucine and L-valine, respectively.</text>
</comment>
<comment type="catalytic activity">
    <reaction evidence="1">
        <text>(2R)-2,3-dihydroxy-3-methylbutanoate = 3-methyl-2-oxobutanoate + H2O</text>
        <dbReference type="Rhea" id="RHEA:24809"/>
        <dbReference type="ChEBI" id="CHEBI:11851"/>
        <dbReference type="ChEBI" id="CHEBI:15377"/>
        <dbReference type="ChEBI" id="CHEBI:49072"/>
        <dbReference type="EC" id="4.2.1.9"/>
    </reaction>
    <physiologicalReaction direction="left-to-right" evidence="1">
        <dbReference type="Rhea" id="RHEA:24810"/>
    </physiologicalReaction>
</comment>
<comment type="catalytic activity">
    <reaction evidence="1">
        <text>(2R,3R)-2,3-dihydroxy-3-methylpentanoate = (S)-3-methyl-2-oxopentanoate + H2O</text>
        <dbReference type="Rhea" id="RHEA:27694"/>
        <dbReference type="ChEBI" id="CHEBI:15377"/>
        <dbReference type="ChEBI" id="CHEBI:35146"/>
        <dbReference type="ChEBI" id="CHEBI:49258"/>
        <dbReference type="EC" id="4.2.1.9"/>
    </reaction>
    <physiologicalReaction direction="left-to-right" evidence="1">
        <dbReference type="Rhea" id="RHEA:27695"/>
    </physiologicalReaction>
</comment>
<comment type="cofactor">
    <cofactor evidence="1">
        <name>[2Fe-2S] cluster</name>
        <dbReference type="ChEBI" id="CHEBI:190135"/>
    </cofactor>
    <text evidence="1">Binds 1 [2Fe-2S] cluster per subunit. This cluster acts as a Lewis acid cofactor.</text>
</comment>
<comment type="cofactor">
    <cofactor evidence="1">
        <name>Mg(2+)</name>
        <dbReference type="ChEBI" id="CHEBI:18420"/>
    </cofactor>
</comment>
<comment type="pathway">
    <text evidence="1">Amino-acid biosynthesis; L-isoleucine biosynthesis; L-isoleucine from 2-oxobutanoate: step 3/4.</text>
</comment>
<comment type="pathway">
    <text evidence="1">Amino-acid biosynthesis; L-valine biosynthesis; L-valine from pyruvate: step 3/4.</text>
</comment>
<comment type="subunit">
    <text evidence="1">Homodimer.</text>
</comment>
<comment type="similarity">
    <text evidence="1">Belongs to the IlvD/Edd family.</text>
</comment>
<reference key="1">
    <citation type="journal article" date="2009" name="PLoS Genet.">
        <title>Organised genome dynamics in the Escherichia coli species results in highly diverse adaptive paths.</title>
        <authorList>
            <person name="Touchon M."/>
            <person name="Hoede C."/>
            <person name="Tenaillon O."/>
            <person name="Barbe V."/>
            <person name="Baeriswyl S."/>
            <person name="Bidet P."/>
            <person name="Bingen E."/>
            <person name="Bonacorsi S."/>
            <person name="Bouchier C."/>
            <person name="Bouvet O."/>
            <person name="Calteau A."/>
            <person name="Chiapello H."/>
            <person name="Clermont O."/>
            <person name="Cruveiller S."/>
            <person name="Danchin A."/>
            <person name="Diard M."/>
            <person name="Dossat C."/>
            <person name="Karoui M.E."/>
            <person name="Frapy E."/>
            <person name="Garry L."/>
            <person name="Ghigo J.M."/>
            <person name="Gilles A.M."/>
            <person name="Johnson J."/>
            <person name="Le Bouguenec C."/>
            <person name="Lescat M."/>
            <person name="Mangenot S."/>
            <person name="Martinez-Jehanne V."/>
            <person name="Matic I."/>
            <person name="Nassif X."/>
            <person name="Oztas S."/>
            <person name="Petit M.A."/>
            <person name="Pichon C."/>
            <person name="Rouy Z."/>
            <person name="Ruf C.S."/>
            <person name="Schneider D."/>
            <person name="Tourret J."/>
            <person name="Vacherie B."/>
            <person name="Vallenet D."/>
            <person name="Medigue C."/>
            <person name="Rocha E.P.C."/>
            <person name="Denamur E."/>
        </authorList>
    </citation>
    <scope>NUCLEOTIDE SEQUENCE [LARGE SCALE GENOMIC DNA]</scope>
    <source>
        <strain>IAI39 / ExPEC</strain>
    </source>
</reference>
<accession>B7NU26</accession>
<evidence type="ECO:0000255" key="1">
    <source>
        <dbReference type="HAMAP-Rule" id="MF_00012"/>
    </source>
</evidence>
<protein>
    <recommendedName>
        <fullName evidence="1">Dihydroxy-acid dehydratase</fullName>
        <shortName evidence="1">DAD</shortName>
        <ecNumber evidence="1">4.2.1.9</ecNumber>
    </recommendedName>
</protein>